<comment type="function">
    <text evidence="1">Together with LptE, is involved in the assembly of lipopolysaccharide (LPS) at the surface of the outer membrane.</text>
</comment>
<comment type="subunit">
    <text evidence="1">Component of the lipopolysaccharide transport and assembly complex. Interacts with LptE and LptA.</text>
</comment>
<comment type="subcellular location">
    <subcellularLocation>
        <location evidence="1">Cell outer membrane</location>
    </subcellularLocation>
</comment>
<comment type="PTM">
    <text evidence="1">Contains two intramolecular disulfide bonds.</text>
</comment>
<comment type="similarity">
    <text evidence="1">Belongs to the LptD family.</text>
</comment>
<proteinExistence type="inferred from homology"/>
<reference key="1">
    <citation type="journal article" date="2002" name="Proc. Natl. Acad. Sci. U.S.A.">
        <title>Extensive mosaic structure revealed by the complete genome sequence of uropathogenic Escherichia coli.</title>
        <authorList>
            <person name="Welch R.A."/>
            <person name="Burland V."/>
            <person name="Plunkett G. III"/>
            <person name="Redford P."/>
            <person name="Roesch P."/>
            <person name="Rasko D."/>
            <person name="Buckles E.L."/>
            <person name="Liou S.-R."/>
            <person name="Boutin A."/>
            <person name="Hackett J."/>
            <person name="Stroud D."/>
            <person name="Mayhew G.F."/>
            <person name="Rose D.J."/>
            <person name="Zhou S."/>
            <person name="Schwartz D.C."/>
            <person name="Perna N.T."/>
            <person name="Mobley H.L.T."/>
            <person name="Donnenberg M.S."/>
            <person name="Blattner F.R."/>
        </authorList>
    </citation>
    <scope>NUCLEOTIDE SEQUENCE [LARGE SCALE GENOMIC DNA]</scope>
    <source>
        <strain>CFT073 / ATCC 700928 / UPEC</strain>
    </source>
</reference>
<gene>
    <name evidence="1" type="primary">lptD</name>
    <name type="synonym">imp</name>
    <name type="synonym">ostA</name>
    <name type="ordered locus">c0067</name>
</gene>
<evidence type="ECO:0000255" key="1">
    <source>
        <dbReference type="HAMAP-Rule" id="MF_01411"/>
    </source>
</evidence>
<sequence length="784" mass="89625">MKKRIPTLLATMIATALYSQQGLAADLASQCMLGVPSYDRPLVQGDTNDLPVTINADHAKGDYPDDAVFTGSVDIMQGNSRLQADEVQLHQKEAPGQPEPVRTVDALGNVHYDDNQVILKGPKGWANLNTKDTNVWEGDYQMVGRQGRGKADLMKQRGENRYTILDNGSFTSCLPGSDTWSVVGSEIIHDREEQVAEIWNARFKVGPVPIFYSPYLQLPVGDKRRSGFLIPNAKYTTTNYFEFYLPYYWNIAPNMDATITPHYMHRRGNIMWENEFRYLSQAGAGLMELDYLPSDKVYKDEHPNDDSSRRWLFYWNHSGVMDQVWRFNVDYTKVSDPSYFNDFDNKYGSSTDGYATQKFSVGYAVQNFNATVSTKQFQVFSEQNTSSYSAEPQLDVNYYQNDVGPFDTRIYGQAVHFVNTRDDMPEATRVHLEPTINLPLSNNWGSINTEAKLLATHYQQTNLDWYNSRNTTKLAESANRVMPQFKVDGRMVFERDMEMLAPGYTQTLEPRAQYLYVPYRDQSKIYNYDSSLLQSDYSGLFRDRTYGGLDRIASANQVTTGVTSRIYDDAAVERFNISVGQIYYFTESRTGDDNITWENDDKTGSLVWAGDTYWRISDRWGLRGGIQYDTRLDNVATSNSSIEYRRDEDRLVQLNYRYASPEYIQATLPKYYSTAEQYKNGISQVGAVASWPIADRWSIVGAYYYDTNANKQADSMLGVQYSSCCYAIRVGYERKLNGWDNDKQHAVYDNAIGFNIELRGLSSNYGLGTQEMLRSNILPYQNTL</sequence>
<keyword id="KW-0998">Cell outer membrane</keyword>
<keyword id="KW-1015">Disulfide bond</keyword>
<keyword id="KW-0472">Membrane</keyword>
<keyword id="KW-1185">Reference proteome</keyword>
<keyword id="KW-0732">Signal</keyword>
<organism>
    <name type="scientific">Escherichia coli O6:H1 (strain CFT073 / ATCC 700928 / UPEC)</name>
    <dbReference type="NCBI Taxonomy" id="199310"/>
    <lineage>
        <taxon>Bacteria</taxon>
        <taxon>Pseudomonadati</taxon>
        <taxon>Pseudomonadota</taxon>
        <taxon>Gammaproteobacteria</taxon>
        <taxon>Enterobacterales</taxon>
        <taxon>Enterobacteriaceae</taxon>
        <taxon>Escherichia</taxon>
    </lineage>
</organism>
<protein>
    <recommendedName>
        <fullName evidence="1">LPS-assembly protein LptD</fullName>
    </recommendedName>
</protein>
<dbReference type="EMBL" id="AE014075">
    <property type="protein sequence ID" value="AAN78563.1"/>
    <property type="molecule type" value="Genomic_DNA"/>
</dbReference>
<dbReference type="RefSeq" id="WP_000746170.1">
    <property type="nucleotide sequence ID" value="NZ_CP051263.1"/>
</dbReference>
<dbReference type="SMR" id="Q8CWE6"/>
<dbReference type="STRING" id="199310.c0067"/>
<dbReference type="KEGG" id="ecc:c0067"/>
<dbReference type="eggNOG" id="COG1452">
    <property type="taxonomic scope" value="Bacteria"/>
</dbReference>
<dbReference type="HOGENOM" id="CLU_009039_2_0_6"/>
<dbReference type="BioCyc" id="ECOL199310:C0067-MONOMER"/>
<dbReference type="Proteomes" id="UP000001410">
    <property type="component" value="Chromosome"/>
</dbReference>
<dbReference type="GO" id="GO:0009279">
    <property type="term" value="C:cell outer membrane"/>
    <property type="evidence" value="ECO:0007669"/>
    <property type="project" value="UniProtKB-SubCell"/>
</dbReference>
<dbReference type="GO" id="GO:1990351">
    <property type="term" value="C:transporter complex"/>
    <property type="evidence" value="ECO:0007669"/>
    <property type="project" value="TreeGrafter"/>
</dbReference>
<dbReference type="GO" id="GO:0043165">
    <property type="term" value="P:Gram-negative-bacterium-type cell outer membrane assembly"/>
    <property type="evidence" value="ECO:0007669"/>
    <property type="project" value="UniProtKB-UniRule"/>
</dbReference>
<dbReference type="GO" id="GO:0015920">
    <property type="term" value="P:lipopolysaccharide transport"/>
    <property type="evidence" value="ECO:0007669"/>
    <property type="project" value="InterPro"/>
</dbReference>
<dbReference type="FunFam" id="2.60.450.10:FF:000003">
    <property type="entry name" value="LPS-assembly protein LptD"/>
    <property type="match status" value="1"/>
</dbReference>
<dbReference type="Gene3D" id="2.60.450.10">
    <property type="entry name" value="Lipopolysaccharide (LPS) transport protein A like domain"/>
    <property type="match status" value="1"/>
</dbReference>
<dbReference type="HAMAP" id="MF_01411">
    <property type="entry name" value="LPS_assembly_LptD"/>
    <property type="match status" value="1"/>
</dbReference>
<dbReference type="InterPro" id="IPR020889">
    <property type="entry name" value="LipoPS_assembly_LptD"/>
</dbReference>
<dbReference type="InterPro" id="IPR050218">
    <property type="entry name" value="LptD"/>
</dbReference>
<dbReference type="InterPro" id="IPR007543">
    <property type="entry name" value="LptD_C"/>
</dbReference>
<dbReference type="InterPro" id="IPR005653">
    <property type="entry name" value="OstA-like_N"/>
</dbReference>
<dbReference type="NCBIfam" id="NF002997">
    <property type="entry name" value="PRK03761.1"/>
    <property type="match status" value="1"/>
</dbReference>
<dbReference type="PANTHER" id="PTHR30189">
    <property type="entry name" value="LPS-ASSEMBLY PROTEIN"/>
    <property type="match status" value="1"/>
</dbReference>
<dbReference type="PANTHER" id="PTHR30189:SF1">
    <property type="entry name" value="LPS-ASSEMBLY PROTEIN LPTD"/>
    <property type="match status" value="1"/>
</dbReference>
<dbReference type="Pfam" id="PF04453">
    <property type="entry name" value="LptD"/>
    <property type="match status" value="1"/>
</dbReference>
<dbReference type="Pfam" id="PF03968">
    <property type="entry name" value="LptD_N"/>
    <property type="match status" value="1"/>
</dbReference>
<name>LPTD_ECOL6</name>
<accession>Q8CWE6</accession>
<feature type="signal peptide" evidence="1">
    <location>
        <begin position="1"/>
        <end position="24"/>
    </location>
</feature>
<feature type="chain" id="PRO_0000020277" description="LPS-assembly protein LptD">
    <location>
        <begin position="25"/>
        <end position="784"/>
    </location>
</feature>
<feature type="disulfide bond" evidence="1">
    <location>
        <begin position="31"/>
        <end position="724"/>
    </location>
</feature>
<feature type="disulfide bond" evidence="1">
    <location>
        <begin position="173"/>
        <end position="725"/>
    </location>
</feature>